<gene>
    <name evidence="1" type="primary">rps4</name>
    <name type="ordered locus">TSIB_0340</name>
</gene>
<sequence length="180" mass="21094">MGDPKRQRKRYETPSHPWIKERLDRERVLVQKYALKNKKELWKHETQLKNFRRRARRLLAARGKQAEIERAQLLQRLARLGILPEGAHLDDVLSLTIDDILERRLQTLVFKKGLARTIKQARQLIVHGHIEVNGQIIRSPSYLVLKEEEDGITYGRASPFANSQHPERMVIEEVQKGEAQ</sequence>
<comment type="function">
    <text evidence="1">One of the primary rRNA binding proteins, it binds directly to 16S rRNA where it nucleates assembly of the body of the 30S subunit.</text>
</comment>
<comment type="function">
    <text evidence="1">With S5 and S12 plays an important role in translational accuracy.</text>
</comment>
<comment type="subunit">
    <text evidence="1">Part of the 30S ribosomal subunit. Contacts protein S5. The interaction surface between S4 and S5 is involved in control of translational fidelity.</text>
</comment>
<comment type="similarity">
    <text evidence="1">Belongs to the universal ribosomal protein uS4 family.</text>
</comment>
<keyword id="KW-1185">Reference proteome</keyword>
<keyword id="KW-0687">Ribonucleoprotein</keyword>
<keyword id="KW-0689">Ribosomal protein</keyword>
<keyword id="KW-0694">RNA-binding</keyword>
<keyword id="KW-0699">rRNA-binding</keyword>
<reference key="1">
    <citation type="journal article" date="2009" name="Appl. Environ. Microbiol.">
        <title>Metabolic versatility and indigenous origin of the archaeon Thermococcus sibiricus, isolated from a siberian oil reservoir, as revealed by genome analysis.</title>
        <authorList>
            <person name="Mardanov A.V."/>
            <person name="Ravin N.V."/>
            <person name="Svetlitchnyi V.A."/>
            <person name="Beletsky A.V."/>
            <person name="Miroshnichenko M.L."/>
            <person name="Bonch-Osmolovskaya E.A."/>
            <person name="Skryabin K.G."/>
        </authorList>
    </citation>
    <scope>NUCLEOTIDE SEQUENCE [LARGE SCALE GENOMIC DNA]</scope>
    <source>
        <strain>DSM 12597 / MM 739</strain>
    </source>
</reference>
<accession>C6A1B1</accession>
<proteinExistence type="inferred from homology"/>
<dbReference type="EMBL" id="CP001463">
    <property type="protein sequence ID" value="ACS89406.1"/>
    <property type="molecule type" value="Genomic_DNA"/>
</dbReference>
<dbReference type="RefSeq" id="WP_015848626.1">
    <property type="nucleotide sequence ID" value="NC_012883.1"/>
</dbReference>
<dbReference type="SMR" id="C6A1B1"/>
<dbReference type="STRING" id="604354.TSIB_0340"/>
<dbReference type="GeneID" id="8095314"/>
<dbReference type="KEGG" id="tsi:TSIB_0340"/>
<dbReference type="eggNOG" id="arCOG04239">
    <property type="taxonomic scope" value="Archaea"/>
</dbReference>
<dbReference type="HOGENOM" id="CLU_089738_1_1_2"/>
<dbReference type="OrthoDB" id="10429at2157"/>
<dbReference type="Proteomes" id="UP000009079">
    <property type="component" value="Chromosome"/>
</dbReference>
<dbReference type="GO" id="GO:0015935">
    <property type="term" value="C:small ribosomal subunit"/>
    <property type="evidence" value="ECO:0007669"/>
    <property type="project" value="InterPro"/>
</dbReference>
<dbReference type="GO" id="GO:0019843">
    <property type="term" value="F:rRNA binding"/>
    <property type="evidence" value="ECO:0007669"/>
    <property type="project" value="UniProtKB-UniRule"/>
</dbReference>
<dbReference type="GO" id="GO:0003735">
    <property type="term" value="F:structural constituent of ribosome"/>
    <property type="evidence" value="ECO:0007669"/>
    <property type="project" value="InterPro"/>
</dbReference>
<dbReference type="GO" id="GO:0042274">
    <property type="term" value="P:ribosomal small subunit biogenesis"/>
    <property type="evidence" value="ECO:0007669"/>
    <property type="project" value="TreeGrafter"/>
</dbReference>
<dbReference type="GO" id="GO:0006412">
    <property type="term" value="P:translation"/>
    <property type="evidence" value="ECO:0007669"/>
    <property type="project" value="UniProtKB-UniRule"/>
</dbReference>
<dbReference type="CDD" id="cd00165">
    <property type="entry name" value="S4"/>
    <property type="match status" value="1"/>
</dbReference>
<dbReference type="Gene3D" id="3.10.290.10">
    <property type="entry name" value="RNA-binding S4 domain"/>
    <property type="match status" value="1"/>
</dbReference>
<dbReference type="HAMAP" id="MF_01306_A">
    <property type="entry name" value="Ribosomal_uS4_A"/>
    <property type="match status" value="1"/>
</dbReference>
<dbReference type="InterPro" id="IPR022801">
    <property type="entry name" value="Ribosomal_uS4"/>
</dbReference>
<dbReference type="InterPro" id="IPR022802">
    <property type="entry name" value="Ribosomal_uS4_arc"/>
</dbReference>
<dbReference type="InterPro" id="IPR018079">
    <property type="entry name" value="Ribosomal_uS4_CS"/>
</dbReference>
<dbReference type="InterPro" id="IPR005710">
    <property type="entry name" value="Ribosomal_uS4_euk/arc"/>
</dbReference>
<dbReference type="InterPro" id="IPR001912">
    <property type="entry name" value="Ribosomal_uS4_N"/>
</dbReference>
<dbReference type="InterPro" id="IPR002942">
    <property type="entry name" value="S4_RNA-bd"/>
</dbReference>
<dbReference type="InterPro" id="IPR036986">
    <property type="entry name" value="S4_RNA-bd_sf"/>
</dbReference>
<dbReference type="NCBIfam" id="NF003139">
    <property type="entry name" value="PRK04051.1"/>
    <property type="match status" value="1"/>
</dbReference>
<dbReference type="NCBIfam" id="TIGR01018">
    <property type="entry name" value="uS4_arch"/>
    <property type="match status" value="1"/>
</dbReference>
<dbReference type="PANTHER" id="PTHR11831">
    <property type="entry name" value="30S 40S RIBOSOMAL PROTEIN"/>
    <property type="match status" value="1"/>
</dbReference>
<dbReference type="PANTHER" id="PTHR11831:SF5">
    <property type="entry name" value="40S RIBOSOMAL PROTEIN S9"/>
    <property type="match status" value="1"/>
</dbReference>
<dbReference type="Pfam" id="PF01479">
    <property type="entry name" value="S4"/>
    <property type="match status" value="1"/>
</dbReference>
<dbReference type="SMART" id="SM01390">
    <property type="entry name" value="Ribosomal_S4"/>
    <property type="match status" value="1"/>
</dbReference>
<dbReference type="SMART" id="SM00363">
    <property type="entry name" value="S4"/>
    <property type="match status" value="1"/>
</dbReference>
<dbReference type="SUPFAM" id="SSF55174">
    <property type="entry name" value="Alpha-L RNA-binding motif"/>
    <property type="match status" value="1"/>
</dbReference>
<dbReference type="PROSITE" id="PS00632">
    <property type="entry name" value="RIBOSOMAL_S4"/>
    <property type="match status" value="1"/>
</dbReference>
<dbReference type="PROSITE" id="PS50889">
    <property type="entry name" value="S4"/>
    <property type="match status" value="1"/>
</dbReference>
<feature type="chain" id="PRO_1000214311" description="Small ribosomal subunit protein uS4">
    <location>
        <begin position="1"/>
        <end position="180"/>
    </location>
</feature>
<feature type="domain" description="S4 RNA-binding" evidence="1">
    <location>
        <begin position="103"/>
        <end position="174"/>
    </location>
</feature>
<organism>
    <name type="scientific">Thermococcus sibiricus (strain DSM 12597 / MM 739)</name>
    <dbReference type="NCBI Taxonomy" id="604354"/>
    <lineage>
        <taxon>Archaea</taxon>
        <taxon>Methanobacteriati</taxon>
        <taxon>Methanobacteriota</taxon>
        <taxon>Thermococci</taxon>
        <taxon>Thermococcales</taxon>
        <taxon>Thermococcaceae</taxon>
        <taxon>Thermococcus</taxon>
    </lineage>
</organism>
<protein>
    <recommendedName>
        <fullName evidence="1">Small ribosomal subunit protein uS4</fullName>
    </recommendedName>
    <alternativeName>
        <fullName evidence="2">30S ribosomal protein S4</fullName>
    </alternativeName>
</protein>
<evidence type="ECO:0000255" key="1">
    <source>
        <dbReference type="HAMAP-Rule" id="MF_01306"/>
    </source>
</evidence>
<evidence type="ECO:0000305" key="2"/>
<name>RS4_THESM</name>